<feature type="chain" id="PRO_1000059847" description="Small ribosomal subunit protein bS21">
    <location>
        <begin position="1"/>
        <end position="71"/>
    </location>
</feature>
<feature type="region of interest" description="Disordered" evidence="2">
    <location>
        <begin position="43"/>
        <end position="71"/>
    </location>
</feature>
<feature type="compositionally biased region" description="Basic residues" evidence="2">
    <location>
        <begin position="46"/>
        <end position="59"/>
    </location>
</feature>
<feature type="compositionally biased region" description="Basic and acidic residues" evidence="2">
    <location>
        <begin position="60"/>
        <end position="71"/>
    </location>
</feature>
<organism>
    <name type="scientific">Enterobacter sp. (strain 638)</name>
    <dbReference type="NCBI Taxonomy" id="399742"/>
    <lineage>
        <taxon>Bacteria</taxon>
        <taxon>Pseudomonadati</taxon>
        <taxon>Pseudomonadota</taxon>
        <taxon>Gammaproteobacteria</taxon>
        <taxon>Enterobacterales</taxon>
        <taxon>Enterobacteriaceae</taxon>
        <taxon>Enterobacter</taxon>
    </lineage>
</organism>
<accession>A4WEK0</accession>
<keyword id="KW-0687">Ribonucleoprotein</keyword>
<keyword id="KW-0689">Ribosomal protein</keyword>
<reference key="1">
    <citation type="journal article" date="2010" name="PLoS Genet.">
        <title>Genome sequence of the plant growth promoting endophytic bacterium Enterobacter sp. 638.</title>
        <authorList>
            <person name="Taghavi S."/>
            <person name="van der Lelie D."/>
            <person name="Hoffman A."/>
            <person name="Zhang Y.B."/>
            <person name="Walla M.D."/>
            <person name="Vangronsveld J."/>
            <person name="Newman L."/>
            <person name="Monchy S."/>
        </authorList>
    </citation>
    <scope>NUCLEOTIDE SEQUENCE [LARGE SCALE GENOMIC DNA]</scope>
    <source>
        <strain>638</strain>
    </source>
</reference>
<sequence length="71" mass="8500">MPVIKVRENEPFDVALRRFKRSCEKAGVLAEVRRREFYEKPTTERKRAKASAVKRHAKKLARENARRTRLY</sequence>
<dbReference type="EMBL" id="CP000653">
    <property type="protein sequence ID" value="ABP62130.1"/>
    <property type="molecule type" value="Genomic_DNA"/>
</dbReference>
<dbReference type="RefSeq" id="WP_001144069.1">
    <property type="nucleotide sequence ID" value="NC_009436.1"/>
</dbReference>
<dbReference type="SMR" id="A4WEK0"/>
<dbReference type="STRING" id="399742.Ent638_3471"/>
<dbReference type="GeneID" id="98390195"/>
<dbReference type="KEGG" id="ent:Ent638_3471"/>
<dbReference type="eggNOG" id="COG0828">
    <property type="taxonomic scope" value="Bacteria"/>
</dbReference>
<dbReference type="HOGENOM" id="CLU_159258_1_0_6"/>
<dbReference type="OrthoDB" id="9799244at2"/>
<dbReference type="Proteomes" id="UP000000230">
    <property type="component" value="Chromosome"/>
</dbReference>
<dbReference type="GO" id="GO:1990904">
    <property type="term" value="C:ribonucleoprotein complex"/>
    <property type="evidence" value="ECO:0007669"/>
    <property type="project" value="UniProtKB-KW"/>
</dbReference>
<dbReference type="GO" id="GO:0005840">
    <property type="term" value="C:ribosome"/>
    <property type="evidence" value="ECO:0007669"/>
    <property type="project" value="UniProtKB-KW"/>
</dbReference>
<dbReference type="GO" id="GO:0003735">
    <property type="term" value="F:structural constituent of ribosome"/>
    <property type="evidence" value="ECO:0007669"/>
    <property type="project" value="InterPro"/>
</dbReference>
<dbReference type="GO" id="GO:0006412">
    <property type="term" value="P:translation"/>
    <property type="evidence" value="ECO:0007669"/>
    <property type="project" value="UniProtKB-UniRule"/>
</dbReference>
<dbReference type="FunFam" id="1.20.5.1150:FF:000001">
    <property type="entry name" value="30S ribosomal protein S21"/>
    <property type="match status" value="1"/>
</dbReference>
<dbReference type="Gene3D" id="1.20.5.1150">
    <property type="entry name" value="Ribosomal protein S8"/>
    <property type="match status" value="1"/>
</dbReference>
<dbReference type="HAMAP" id="MF_00358">
    <property type="entry name" value="Ribosomal_bS21"/>
    <property type="match status" value="1"/>
</dbReference>
<dbReference type="InterPro" id="IPR001911">
    <property type="entry name" value="Ribosomal_bS21"/>
</dbReference>
<dbReference type="InterPro" id="IPR018278">
    <property type="entry name" value="Ribosomal_bS21_CS"/>
</dbReference>
<dbReference type="InterPro" id="IPR038380">
    <property type="entry name" value="Ribosomal_bS21_sf"/>
</dbReference>
<dbReference type="NCBIfam" id="TIGR00030">
    <property type="entry name" value="S21p"/>
    <property type="match status" value="1"/>
</dbReference>
<dbReference type="PANTHER" id="PTHR21109">
    <property type="entry name" value="MITOCHONDRIAL 28S RIBOSOMAL PROTEIN S21"/>
    <property type="match status" value="1"/>
</dbReference>
<dbReference type="PANTHER" id="PTHR21109:SF22">
    <property type="entry name" value="SMALL RIBOSOMAL SUBUNIT PROTEIN BS21"/>
    <property type="match status" value="1"/>
</dbReference>
<dbReference type="Pfam" id="PF01165">
    <property type="entry name" value="Ribosomal_S21"/>
    <property type="match status" value="1"/>
</dbReference>
<dbReference type="PRINTS" id="PR00976">
    <property type="entry name" value="RIBOSOMALS21"/>
</dbReference>
<dbReference type="PROSITE" id="PS01181">
    <property type="entry name" value="RIBOSOMAL_S21"/>
    <property type="match status" value="1"/>
</dbReference>
<gene>
    <name evidence="1" type="primary">rpsU</name>
    <name type="ordered locus">Ent638_3471</name>
</gene>
<evidence type="ECO:0000255" key="1">
    <source>
        <dbReference type="HAMAP-Rule" id="MF_00358"/>
    </source>
</evidence>
<evidence type="ECO:0000256" key="2">
    <source>
        <dbReference type="SAM" id="MobiDB-lite"/>
    </source>
</evidence>
<evidence type="ECO:0000305" key="3"/>
<comment type="similarity">
    <text evidence="1">Belongs to the bacterial ribosomal protein bS21 family.</text>
</comment>
<protein>
    <recommendedName>
        <fullName evidence="1">Small ribosomal subunit protein bS21</fullName>
    </recommendedName>
    <alternativeName>
        <fullName evidence="3">30S ribosomal protein S21</fullName>
    </alternativeName>
</protein>
<proteinExistence type="inferred from homology"/>
<name>RS21_ENT38</name>